<sequence length="173" mass="18791">MSIILGIDPGSRITGYGVIRQVGRQLTYLGSGCIRTKVDDLPSRLKLIYAGVTEIITQFQPDYFAIEQVFMAKNADSALKLGQARGVAIVAAVNQELPVFEYAARQVKQTVVGIGSAEKSQVQHMVRTLLKLPANPQADAADALAIAITHCHVSQNAMQMSESRLNLARGRLR</sequence>
<gene>
    <name evidence="1" type="primary">ruvC</name>
    <name type="ordered locus">SG1154</name>
</gene>
<protein>
    <recommendedName>
        <fullName evidence="1">Crossover junction endodeoxyribonuclease RuvC</fullName>
        <ecNumber evidence="1">3.1.21.10</ecNumber>
    </recommendedName>
    <alternativeName>
        <fullName evidence="1">Holliday junction nuclease RuvC</fullName>
    </alternativeName>
    <alternativeName>
        <fullName evidence="1">Holliday junction resolvase RuvC</fullName>
    </alternativeName>
</protein>
<organism>
    <name type="scientific">Salmonella gallinarum (strain 287/91 / NCTC 13346)</name>
    <dbReference type="NCBI Taxonomy" id="550538"/>
    <lineage>
        <taxon>Bacteria</taxon>
        <taxon>Pseudomonadati</taxon>
        <taxon>Pseudomonadota</taxon>
        <taxon>Gammaproteobacteria</taxon>
        <taxon>Enterobacterales</taxon>
        <taxon>Enterobacteriaceae</taxon>
        <taxon>Salmonella</taxon>
    </lineage>
</organism>
<proteinExistence type="inferred from homology"/>
<dbReference type="EC" id="3.1.21.10" evidence="1"/>
<dbReference type="EMBL" id="AM933173">
    <property type="protein sequence ID" value="CAR37035.1"/>
    <property type="molecule type" value="Genomic_DNA"/>
</dbReference>
<dbReference type="RefSeq" id="WP_000022509.1">
    <property type="nucleotide sequence ID" value="NC_011274.1"/>
</dbReference>
<dbReference type="SMR" id="B5R8D9"/>
<dbReference type="GeneID" id="93033412"/>
<dbReference type="KEGG" id="seg:SG1154"/>
<dbReference type="HOGENOM" id="CLU_091257_2_1_6"/>
<dbReference type="Proteomes" id="UP000008321">
    <property type="component" value="Chromosome"/>
</dbReference>
<dbReference type="GO" id="GO:0005737">
    <property type="term" value="C:cytoplasm"/>
    <property type="evidence" value="ECO:0007669"/>
    <property type="project" value="UniProtKB-SubCell"/>
</dbReference>
<dbReference type="GO" id="GO:0048476">
    <property type="term" value="C:Holliday junction resolvase complex"/>
    <property type="evidence" value="ECO:0007669"/>
    <property type="project" value="UniProtKB-UniRule"/>
</dbReference>
<dbReference type="GO" id="GO:0008821">
    <property type="term" value="F:crossover junction DNA endonuclease activity"/>
    <property type="evidence" value="ECO:0007669"/>
    <property type="project" value="UniProtKB-UniRule"/>
</dbReference>
<dbReference type="GO" id="GO:0003677">
    <property type="term" value="F:DNA binding"/>
    <property type="evidence" value="ECO:0007669"/>
    <property type="project" value="UniProtKB-KW"/>
</dbReference>
<dbReference type="GO" id="GO:0000287">
    <property type="term" value="F:magnesium ion binding"/>
    <property type="evidence" value="ECO:0007669"/>
    <property type="project" value="UniProtKB-UniRule"/>
</dbReference>
<dbReference type="GO" id="GO:0006310">
    <property type="term" value="P:DNA recombination"/>
    <property type="evidence" value="ECO:0007669"/>
    <property type="project" value="UniProtKB-UniRule"/>
</dbReference>
<dbReference type="GO" id="GO:0006281">
    <property type="term" value="P:DNA repair"/>
    <property type="evidence" value="ECO:0007669"/>
    <property type="project" value="UniProtKB-UniRule"/>
</dbReference>
<dbReference type="CDD" id="cd16962">
    <property type="entry name" value="RuvC"/>
    <property type="match status" value="1"/>
</dbReference>
<dbReference type="FunFam" id="3.30.420.10:FF:000002">
    <property type="entry name" value="Crossover junction endodeoxyribonuclease RuvC"/>
    <property type="match status" value="1"/>
</dbReference>
<dbReference type="Gene3D" id="3.30.420.10">
    <property type="entry name" value="Ribonuclease H-like superfamily/Ribonuclease H"/>
    <property type="match status" value="1"/>
</dbReference>
<dbReference type="HAMAP" id="MF_00034">
    <property type="entry name" value="RuvC"/>
    <property type="match status" value="1"/>
</dbReference>
<dbReference type="InterPro" id="IPR012337">
    <property type="entry name" value="RNaseH-like_sf"/>
</dbReference>
<dbReference type="InterPro" id="IPR036397">
    <property type="entry name" value="RNaseH_sf"/>
</dbReference>
<dbReference type="InterPro" id="IPR020563">
    <property type="entry name" value="X-over_junc_endoDNase_Mg_BS"/>
</dbReference>
<dbReference type="InterPro" id="IPR002176">
    <property type="entry name" value="X-over_junc_endoDNase_RuvC"/>
</dbReference>
<dbReference type="NCBIfam" id="NF000711">
    <property type="entry name" value="PRK00039.2-1"/>
    <property type="match status" value="1"/>
</dbReference>
<dbReference type="NCBIfam" id="TIGR00228">
    <property type="entry name" value="ruvC"/>
    <property type="match status" value="1"/>
</dbReference>
<dbReference type="PANTHER" id="PTHR30194">
    <property type="entry name" value="CROSSOVER JUNCTION ENDODEOXYRIBONUCLEASE RUVC"/>
    <property type="match status" value="1"/>
</dbReference>
<dbReference type="PANTHER" id="PTHR30194:SF3">
    <property type="entry name" value="CROSSOVER JUNCTION ENDODEOXYRIBONUCLEASE RUVC"/>
    <property type="match status" value="1"/>
</dbReference>
<dbReference type="Pfam" id="PF02075">
    <property type="entry name" value="RuvC"/>
    <property type="match status" value="1"/>
</dbReference>
<dbReference type="PRINTS" id="PR00696">
    <property type="entry name" value="RSOLVASERUVC"/>
</dbReference>
<dbReference type="SUPFAM" id="SSF53098">
    <property type="entry name" value="Ribonuclease H-like"/>
    <property type="match status" value="1"/>
</dbReference>
<dbReference type="PROSITE" id="PS01321">
    <property type="entry name" value="RUVC"/>
    <property type="match status" value="1"/>
</dbReference>
<feature type="chain" id="PRO_1000090558" description="Crossover junction endodeoxyribonuclease RuvC">
    <location>
        <begin position="1"/>
        <end position="173"/>
    </location>
</feature>
<feature type="active site" evidence="1">
    <location>
        <position position="8"/>
    </location>
</feature>
<feature type="active site" evidence="1">
    <location>
        <position position="67"/>
    </location>
</feature>
<feature type="active site" evidence="1">
    <location>
        <position position="139"/>
    </location>
</feature>
<feature type="binding site" evidence="1">
    <location>
        <position position="8"/>
    </location>
    <ligand>
        <name>Mg(2+)</name>
        <dbReference type="ChEBI" id="CHEBI:18420"/>
        <label>1</label>
    </ligand>
</feature>
<feature type="binding site" evidence="1">
    <location>
        <position position="67"/>
    </location>
    <ligand>
        <name>Mg(2+)</name>
        <dbReference type="ChEBI" id="CHEBI:18420"/>
        <label>2</label>
    </ligand>
</feature>
<feature type="binding site" evidence="1">
    <location>
        <position position="139"/>
    </location>
    <ligand>
        <name>Mg(2+)</name>
        <dbReference type="ChEBI" id="CHEBI:18420"/>
        <label>1</label>
    </ligand>
</feature>
<evidence type="ECO:0000255" key="1">
    <source>
        <dbReference type="HAMAP-Rule" id="MF_00034"/>
    </source>
</evidence>
<keyword id="KW-0963">Cytoplasm</keyword>
<keyword id="KW-0227">DNA damage</keyword>
<keyword id="KW-0233">DNA recombination</keyword>
<keyword id="KW-0234">DNA repair</keyword>
<keyword id="KW-0238">DNA-binding</keyword>
<keyword id="KW-0255">Endonuclease</keyword>
<keyword id="KW-0378">Hydrolase</keyword>
<keyword id="KW-0460">Magnesium</keyword>
<keyword id="KW-0479">Metal-binding</keyword>
<keyword id="KW-0540">Nuclease</keyword>
<reference key="1">
    <citation type="journal article" date="2008" name="Genome Res.">
        <title>Comparative genome analysis of Salmonella enteritidis PT4 and Salmonella gallinarum 287/91 provides insights into evolutionary and host adaptation pathways.</title>
        <authorList>
            <person name="Thomson N.R."/>
            <person name="Clayton D.J."/>
            <person name="Windhorst D."/>
            <person name="Vernikos G."/>
            <person name="Davidson S."/>
            <person name="Churcher C."/>
            <person name="Quail M.A."/>
            <person name="Stevens M."/>
            <person name="Jones M.A."/>
            <person name="Watson M."/>
            <person name="Barron A."/>
            <person name="Layton A."/>
            <person name="Pickard D."/>
            <person name="Kingsley R.A."/>
            <person name="Bignell A."/>
            <person name="Clark L."/>
            <person name="Harris B."/>
            <person name="Ormond D."/>
            <person name="Abdellah Z."/>
            <person name="Brooks K."/>
            <person name="Cherevach I."/>
            <person name="Chillingworth T."/>
            <person name="Woodward J."/>
            <person name="Norberczak H."/>
            <person name="Lord A."/>
            <person name="Arrowsmith C."/>
            <person name="Jagels K."/>
            <person name="Moule S."/>
            <person name="Mungall K."/>
            <person name="Saunders M."/>
            <person name="Whitehead S."/>
            <person name="Chabalgoity J.A."/>
            <person name="Maskell D."/>
            <person name="Humphreys T."/>
            <person name="Roberts M."/>
            <person name="Barrow P.A."/>
            <person name="Dougan G."/>
            <person name="Parkhill J."/>
        </authorList>
    </citation>
    <scope>NUCLEOTIDE SEQUENCE [LARGE SCALE GENOMIC DNA]</scope>
    <source>
        <strain>287/91 / NCTC 13346</strain>
    </source>
</reference>
<accession>B5R8D9</accession>
<name>RUVC_SALG2</name>
<comment type="function">
    <text evidence="1">The RuvA-RuvB-RuvC complex processes Holliday junction (HJ) DNA during genetic recombination and DNA repair. Endonuclease that resolves HJ intermediates. Cleaves cruciform DNA by making single-stranded nicks across the HJ at symmetrical positions within the homologous arms, yielding a 5'-phosphate and a 3'-hydroxyl group; requires a central core of homology in the junction. The consensus cleavage sequence is 5'-(A/T)TT(C/G)-3'. Cleavage occurs on the 3'-side of the TT dinucleotide at the point of strand exchange. HJ branch migration catalyzed by RuvA-RuvB allows RuvC to scan DNA until it finds its consensus sequence, where it cleaves and resolves the cruciform DNA.</text>
</comment>
<comment type="catalytic activity">
    <reaction evidence="1">
        <text>Endonucleolytic cleavage at a junction such as a reciprocal single-stranded crossover between two homologous DNA duplexes (Holliday junction).</text>
        <dbReference type="EC" id="3.1.21.10"/>
    </reaction>
</comment>
<comment type="cofactor">
    <cofactor evidence="1">
        <name>Mg(2+)</name>
        <dbReference type="ChEBI" id="CHEBI:18420"/>
    </cofactor>
    <text evidence="1">Binds 2 Mg(2+) ion per subunit.</text>
</comment>
<comment type="subunit">
    <text evidence="1">Homodimer which binds Holliday junction (HJ) DNA. The HJ becomes 2-fold symmetrical on binding to RuvC with unstacked arms; it has a different conformation from HJ DNA in complex with RuvA. In the full resolvosome a probable DNA-RuvA(4)-RuvB(12)-RuvC(2) complex forms which resolves the HJ.</text>
</comment>
<comment type="subcellular location">
    <subcellularLocation>
        <location evidence="1">Cytoplasm</location>
    </subcellularLocation>
</comment>
<comment type="similarity">
    <text evidence="1">Belongs to the RuvC family.</text>
</comment>